<dbReference type="EC" id="5.1.1.7" evidence="1"/>
<dbReference type="EMBL" id="AP009044">
    <property type="protein sequence ID" value="BAF54767.1"/>
    <property type="molecule type" value="Genomic_DNA"/>
</dbReference>
<dbReference type="RefSeq" id="WP_011897378.1">
    <property type="nucleotide sequence ID" value="NC_009342.1"/>
</dbReference>
<dbReference type="SMR" id="A4QEV1"/>
<dbReference type="KEGG" id="cgt:cgR_1773"/>
<dbReference type="HOGENOM" id="CLU_053306_4_0_11"/>
<dbReference type="PhylomeDB" id="A4QEV1"/>
<dbReference type="UniPathway" id="UPA00034">
    <property type="reaction ID" value="UER00025"/>
</dbReference>
<dbReference type="Proteomes" id="UP000006698">
    <property type="component" value="Chromosome"/>
</dbReference>
<dbReference type="GO" id="GO:0005829">
    <property type="term" value="C:cytosol"/>
    <property type="evidence" value="ECO:0007669"/>
    <property type="project" value="TreeGrafter"/>
</dbReference>
<dbReference type="GO" id="GO:0008837">
    <property type="term" value="F:diaminopimelate epimerase activity"/>
    <property type="evidence" value="ECO:0007669"/>
    <property type="project" value="UniProtKB-UniRule"/>
</dbReference>
<dbReference type="GO" id="GO:0009089">
    <property type="term" value="P:lysine biosynthetic process via diaminopimelate"/>
    <property type="evidence" value="ECO:0007669"/>
    <property type="project" value="UniProtKB-UniRule"/>
</dbReference>
<dbReference type="Gene3D" id="3.10.310.10">
    <property type="entry name" value="Diaminopimelate Epimerase, Chain A, domain 1"/>
    <property type="match status" value="2"/>
</dbReference>
<dbReference type="HAMAP" id="MF_00197">
    <property type="entry name" value="DAP_epimerase"/>
    <property type="match status" value="1"/>
</dbReference>
<dbReference type="InterPro" id="IPR018510">
    <property type="entry name" value="DAP_epimerase_AS"/>
</dbReference>
<dbReference type="InterPro" id="IPR001653">
    <property type="entry name" value="DAP_epimerase_DapF"/>
</dbReference>
<dbReference type="NCBIfam" id="TIGR00652">
    <property type="entry name" value="DapF"/>
    <property type="match status" value="1"/>
</dbReference>
<dbReference type="PANTHER" id="PTHR31689:SF0">
    <property type="entry name" value="DIAMINOPIMELATE EPIMERASE"/>
    <property type="match status" value="1"/>
</dbReference>
<dbReference type="PANTHER" id="PTHR31689">
    <property type="entry name" value="DIAMINOPIMELATE EPIMERASE, CHLOROPLASTIC"/>
    <property type="match status" value="1"/>
</dbReference>
<dbReference type="Pfam" id="PF01678">
    <property type="entry name" value="DAP_epimerase"/>
    <property type="match status" value="2"/>
</dbReference>
<dbReference type="SUPFAM" id="SSF54506">
    <property type="entry name" value="Diaminopimelate epimerase-like"/>
    <property type="match status" value="2"/>
</dbReference>
<dbReference type="PROSITE" id="PS01326">
    <property type="entry name" value="DAP_EPIMERASE"/>
    <property type="match status" value="1"/>
</dbReference>
<organism>
    <name type="scientific">Corynebacterium glutamicum (strain R)</name>
    <dbReference type="NCBI Taxonomy" id="340322"/>
    <lineage>
        <taxon>Bacteria</taxon>
        <taxon>Bacillati</taxon>
        <taxon>Actinomycetota</taxon>
        <taxon>Actinomycetes</taxon>
        <taxon>Mycobacteriales</taxon>
        <taxon>Corynebacteriaceae</taxon>
        <taxon>Corynebacterium</taxon>
    </lineage>
</organism>
<protein>
    <recommendedName>
        <fullName evidence="1">Diaminopimelate epimerase</fullName>
        <shortName evidence="1">DAP epimerase</shortName>
        <ecNumber evidence="1">5.1.1.7</ecNumber>
    </recommendedName>
    <alternativeName>
        <fullName evidence="1">PLP-independent amino acid racemase</fullName>
    </alternativeName>
</protein>
<name>DAPF_CORGB</name>
<gene>
    <name evidence="1" type="primary">dapF</name>
    <name type="ordered locus">cgR_1773</name>
</gene>
<sequence length="277" mass="29260">MNLTIPFAKGHATENDFIIIPDEDARLDLTPEMVVKLCDRRAGIGADGILRVVKAADVEGSTVDPSLWFMDYRNADGSLAEMCGNGVRLFAHWLYSRSLVDNTSFDIGTRAGVRHVDILQADQHSAQVRVDMGIPDVTGLSTCDINGQVFAGLGVDMGNPHLACVVPGLSASALADMELRAPTFDQEFFPHGVNVEIVTELEDDAVSMRVWERGVGETRSCGTGTVAAACAALADAGLGEGTVKVCVPGGEVEVQIFDDGSTLTGPSAIIALGEVQI</sequence>
<proteinExistence type="inferred from homology"/>
<evidence type="ECO:0000255" key="1">
    <source>
        <dbReference type="HAMAP-Rule" id="MF_00197"/>
    </source>
</evidence>
<reference key="1">
    <citation type="journal article" date="2007" name="Microbiology">
        <title>Comparative analysis of the Corynebacterium glutamicum group and complete genome sequence of strain R.</title>
        <authorList>
            <person name="Yukawa H."/>
            <person name="Omumasaba C.A."/>
            <person name="Nonaka H."/>
            <person name="Kos P."/>
            <person name="Okai N."/>
            <person name="Suzuki N."/>
            <person name="Suda M."/>
            <person name="Tsuge Y."/>
            <person name="Watanabe J."/>
            <person name="Ikeda Y."/>
            <person name="Vertes A.A."/>
            <person name="Inui M."/>
        </authorList>
    </citation>
    <scope>NUCLEOTIDE SEQUENCE [LARGE SCALE GENOMIC DNA]</scope>
    <source>
        <strain>R</strain>
    </source>
</reference>
<feature type="chain" id="PRO_1000011872" description="Diaminopimelate epimerase">
    <location>
        <begin position="1"/>
        <end position="277"/>
    </location>
</feature>
<feature type="active site" description="Proton donor" evidence="1">
    <location>
        <position position="83"/>
    </location>
</feature>
<feature type="active site" description="Proton acceptor" evidence="1">
    <location>
        <position position="221"/>
    </location>
</feature>
<feature type="binding site" evidence="1">
    <location>
        <position position="15"/>
    </location>
    <ligand>
        <name>substrate</name>
    </ligand>
</feature>
<feature type="binding site" evidence="1">
    <location>
        <position position="74"/>
    </location>
    <ligand>
        <name>substrate</name>
    </ligand>
</feature>
<feature type="binding site" evidence="1">
    <location>
        <begin position="84"/>
        <end position="85"/>
    </location>
    <ligand>
        <name>substrate</name>
    </ligand>
</feature>
<feature type="binding site" evidence="1">
    <location>
        <position position="159"/>
    </location>
    <ligand>
        <name>substrate</name>
    </ligand>
</feature>
<feature type="binding site" evidence="1">
    <location>
        <position position="194"/>
    </location>
    <ligand>
        <name>substrate</name>
    </ligand>
</feature>
<feature type="binding site" evidence="1">
    <location>
        <begin position="212"/>
        <end position="213"/>
    </location>
    <ligand>
        <name>substrate</name>
    </ligand>
</feature>
<feature type="binding site" evidence="1">
    <location>
        <begin position="222"/>
        <end position="223"/>
    </location>
    <ligand>
        <name>substrate</name>
    </ligand>
</feature>
<feature type="site" description="Could be important to modulate the pK values of the two catalytic cysteine residues" evidence="1">
    <location>
        <position position="161"/>
    </location>
</feature>
<feature type="site" description="Could be important to modulate the pK values of the two catalytic cysteine residues" evidence="1">
    <location>
        <position position="212"/>
    </location>
</feature>
<accession>A4QEV1</accession>
<keyword id="KW-0028">Amino-acid biosynthesis</keyword>
<keyword id="KW-0963">Cytoplasm</keyword>
<keyword id="KW-0413">Isomerase</keyword>
<keyword id="KW-0457">Lysine biosynthesis</keyword>
<comment type="function">
    <text evidence="1">Catalyzes the stereoinversion of LL-2,6-diaminopimelate (L,L-DAP) to meso-diaminopimelate (meso-DAP), a precursor of L-lysine and an essential component of the bacterial peptidoglycan.</text>
</comment>
<comment type="catalytic activity">
    <reaction evidence="1">
        <text>(2S,6S)-2,6-diaminopimelate = meso-2,6-diaminopimelate</text>
        <dbReference type="Rhea" id="RHEA:15393"/>
        <dbReference type="ChEBI" id="CHEBI:57609"/>
        <dbReference type="ChEBI" id="CHEBI:57791"/>
        <dbReference type="EC" id="5.1.1.7"/>
    </reaction>
</comment>
<comment type="pathway">
    <text evidence="1">Amino-acid biosynthesis; L-lysine biosynthesis via DAP pathway; DL-2,6-diaminopimelate from LL-2,6-diaminopimelate: step 1/1.</text>
</comment>
<comment type="subunit">
    <text evidence="1">Homodimer.</text>
</comment>
<comment type="subcellular location">
    <subcellularLocation>
        <location evidence="1">Cytoplasm</location>
    </subcellularLocation>
</comment>
<comment type="similarity">
    <text evidence="1">Belongs to the diaminopimelate epimerase family.</text>
</comment>